<dbReference type="EC" id="1.1.1.302"/>
<dbReference type="EMBL" id="AE016818">
    <property type="protein sequence ID" value="AAS52721.1"/>
    <property type="molecule type" value="Genomic_DNA"/>
</dbReference>
<dbReference type="RefSeq" id="NP_984897.1">
    <property type="nucleotide sequence ID" value="NM_210251.1"/>
</dbReference>
<dbReference type="SMR" id="Q757H6"/>
<dbReference type="FunCoup" id="Q757H6">
    <property type="interactions" value="119"/>
</dbReference>
<dbReference type="STRING" id="284811.Q757H6"/>
<dbReference type="EnsemblFungi" id="AAS52721">
    <property type="protein sequence ID" value="AAS52721"/>
    <property type="gene ID" value="AGOS_AER037C"/>
</dbReference>
<dbReference type="GeneID" id="4621099"/>
<dbReference type="KEGG" id="ago:AGOS_AER037C"/>
<dbReference type="eggNOG" id="ENOG502RZWZ">
    <property type="taxonomic scope" value="Eukaryota"/>
</dbReference>
<dbReference type="HOGENOM" id="CLU_036590_5_0_1"/>
<dbReference type="InParanoid" id="Q757H6"/>
<dbReference type="OMA" id="HYLRYHH"/>
<dbReference type="OrthoDB" id="5432at2759"/>
<dbReference type="UniPathway" id="UPA00275"/>
<dbReference type="Proteomes" id="UP000000591">
    <property type="component" value="Chromosome V"/>
</dbReference>
<dbReference type="GO" id="GO:0008703">
    <property type="term" value="F:5-amino-6-(5-phosphoribosylamino)uracil reductase activity"/>
    <property type="evidence" value="ECO:0007669"/>
    <property type="project" value="EnsemblFungi"/>
</dbReference>
<dbReference type="GO" id="GO:0050661">
    <property type="term" value="F:NADP binding"/>
    <property type="evidence" value="ECO:0007669"/>
    <property type="project" value="InterPro"/>
</dbReference>
<dbReference type="GO" id="GO:0009231">
    <property type="term" value="P:riboflavin biosynthetic process"/>
    <property type="evidence" value="ECO:0007669"/>
    <property type="project" value="UniProtKB-UniPathway"/>
</dbReference>
<dbReference type="FunFam" id="3.40.430.10:FF:000011">
    <property type="entry name" value="Rib7p"/>
    <property type="match status" value="1"/>
</dbReference>
<dbReference type="Gene3D" id="3.40.430.10">
    <property type="entry name" value="Dihydrofolate Reductase, subunit A"/>
    <property type="match status" value="1"/>
</dbReference>
<dbReference type="InterPro" id="IPR024072">
    <property type="entry name" value="DHFR-like_dom_sf"/>
</dbReference>
<dbReference type="InterPro" id="IPR011549">
    <property type="entry name" value="RibD_C"/>
</dbReference>
<dbReference type="InterPro" id="IPR002734">
    <property type="entry name" value="RibDG_C"/>
</dbReference>
<dbReference type="InterPro" id="IPR050765">
    <property type="entry name" value="Riboflavin_Biosynth_HTPR"/>
</dbReference>
<dbReference type="NCBIfam" id="TIGR00227">
    <property type="entry name" value="ribD_Cterm"/>
    <property type="match status" value="1"/>
</dbReference>
<dbReference type="PANTHER" id="PTHR38011:SF7">
    <property type="entry name" value="2,5-DIAMINO-6-RIBOSYLAMINO-4(3H)-PYRIMIDINONE 5'-PHOSPHATE REDUCTASE"/>
    <property type="match status" value="1"/>
</dbReference>
<dbReference type="PANTHER" id="PTHR38011">
    <property type="entry name" value="DIHYDROFOLATE REDUCTASE FAMILY PROTEIN (AFU_ORTHOLOGUE AFUA_8G06820)"/>
    <property type="match status" value="1"/>
</dbReference>
<dbReference type="Pfam" id="PF01872">
    <property type="entry name" value="RibD_C"/>
    <property type="match status" value="1"/>
</dbReference>
<dbReference type="SUPFAM" id="SSF53597">
    <property type="entry name" value="Dihydrofolate reductase-like"/>
    <property type="match status" value="1"/>
</dbReference>
<protein>
    <recommendedName>
        <fullName>2,5-diamino-6-ribosylamino-4(3H)-pyrimidinone 5'-phosphate reductase</fullName>
        <shortName>DAROPP reductase</shortName>
        <shortName>DARP reductase</shortName>
        <ecNumber>1.1.1.302</ecNumber>
    </recommendedName>
    <alternativeName>
        <fullName>2,5-diamino-6-(5-phospho-D-ribosylamino)pyrimidin-4(3H)-one reductase</fullName>
    </alternativeName>
    <alternativeName>
        <fullName>2,5-diamino-6-ribitylamino-4(3H)-pyrimidinone 5'-phosphate synthase</fullName>
        <shortName>DARIPP synthase</shortName>
    </alternativeName>
</protein>
<gene>
    <name type="primary">RIB7</name>
    <name type="ordered locus">AER037C</name>
</gene>
<reference key="1">
    <citation type="journal article" date="2004" name="Science">
        <title>The Ashbya gossypii genome as a tool for mapping the ancient Saccharomyces cerevisiae genome.</title>
        <authorList>
            <person name="Dietrich F.S."/>
            <person name="Voegeli S."/>
            <person name="Brachat S."/>
            <person name="Lerch A."/>
            <person name="Gates K."/>
            <person name="Steiner S."/>
            <person name="Mohr C."/>
            <person name="Poehlmann R."/>
            <person name="Luedi P."/>
            <person name="Choi S."/>
            <person name="Wing R.A."/>
            <person name="Flavier A."/>
            <person name="Gaffney T.D."/>
            <person name="Philippsen P."/>
        </authorList>
    </citation>
    <scope>NUCLEOTIDE SEQUENCE [LARGE SCALE GENOMIC DNA]</scope>
    <source>
        <strain>ATCC 10895 / CBS 109.51 / FGSC 9923 / NRRL Y-1056</strain>
    </source>
</reference>
<reference key="2">
    <citation type="journal article" date="2013" name="G3 (Bethesda)">
        <title>Genomes of Ashbya fungi isolated from insects reveal four mating-type loci, numerous translocations, lack of transposons, and distinct gene duplications.</title>
        <authorList>
            <person name="Dietrich F.S."/>
            <person name="Voegeli S."/>
            <person name="Kuo S."/>
            <person name="Philippsen P."/>
        </authorList>
    </citation>
    <scope>GENOME REANNOTATION</scope>
    <source>
        <strain>ATCC 10895 / CBS 109.51 / FGSC 9923 / NRRL Y-1056</strain>
    </source>
</reference>
<sequence length="246" mass="26930">MALIPLSQDLADILAPYLPTPPDSSARLPFVTLTYAQSLDARIAKQKGERTVISHEETKTMTHYLRYHHSGILIGSGTALADDPGLNCRWTPAADGADCTEQSSPRPIILDVRGRWRYRGSKIEYLHNLGKGKAPIVVTGGEPEVRELGVSYLQLGVDEGGRLNWGELFERLYSEHHLESVMVEGGAEVLNQLLLRPDIVDSLVITIGSKFLGSLGVAVSPAEEVNLEHVNWWHGTSDSVLCGRLA</sequence>
<proteinExistence type="inferred from homology"/>
<accession>Q757H6</accession>
<feature type="chain" id="PRO_0000135936" description="2,5-diamino-6-ribosylamino-4(3H)-pyrimidinone 5'-phosphate reductase">
    <location>
        <begin position="1"/>
        <end position="246"/>
    </location>
</feature>
<feature type="binding site" evidence="1">
    <location>
        <position position="78"/>
    </location>
    <ligand>
        <name>NADP(+)</name>
        <dbReference type="ChEBI" id="CHEBI:58349"/>
    </ligand>
</feature>
<feature type="binding site" evidence="1">
    <location>
        <position position="82"/>
    </location>
    <ligand>
        <name>NADP(+)</name>
        <dbReference type="ChEBI" id="CHEBI:58349"/>
    </ligand>
</feature>
<feature type="binding site">
    <location>
        <position position="163"/>
    </location>
    <ligand>
        <name>NADP(+)</name>
        <dbReference type="ChEBI" id="CHEBI:58349"/>
    </ligand>
</feature>
<feature type="binding site" evidence="1">
    <location>
        <begin position="186"/>
        <end position="190"/>
    </location>
    <ligand>
        <name>NADP(+)</name>
        <dbReference type="ChEBI" id="CHEBI:58349"/>
    </ligand>
</feature>
<name>RIB7_EREGS</name>
<comment type="function">
    <text evidence="1">Catalyzes an early step in riboflavin biosynthesis, the NADPH-dependent reduction of the ribose side chain of 2,5-diamino-6-ribosylamino-4(3H)-pyrimidinone 5'-phosphate, yielding 2,5-diamino-6-ribitylamino-4(3H)-pyrimidinone 5'-phosphate.</text>
</comment>
<comment type="catalytic activity">
    <reaction>
        <text>2,5-diamino-6-(1-D-ribitylamino)pyrimidin-4(3H)-one 5'-phosphate + NADP(+) = 2,5-diamino-6-(1-D-ribosylamino)pyrimidin-4(3H)-one 5'-phosphate + NADPH + H(+)</text>
        <dbReference type="Rhea" id="RHEA:27278"/>
        <dbReference type="ChEBI" id="CHEBI:15378"/>
        <dbReference type="ChEBI" id="CHEBI:57783"/>
        <dbReference type="ChEBI" id="CHEBI:58349"/>
        <dbReference type="ChEBI" id="CHEBI:58890"/>
        <dbReference type="ChEBI" id="CHEBI:59545"/>
        <dbReference type="EC" id="1.1.1.302"/>
    </reaction>
</comment>
<comment type="catalytic activity">
    <reaction>
        <text>2,5-diamino-6-(1-D-ribitylamino)pyrimidin-4(3H)-one 5'-phosphate + NAD(+) = 2,5-diamino-6-(1-D-ribosylamino)pyrimidin-4(3H)-one 5'-phosphate + NADH + H(+)</text>
        <dbReference type="Rhea" id="RHEA:27274"/>
        <dbReference type="ChEBI" id="CHEBI:15378"/>
        <dbReference type="ChEBI" id="CHEBI:57540"/>
        <dbReference type="ChEBI" id="CHEBI:57945"/>
        <dbReference type="ChEBI" id="CHEBI:58890"/>
        <dbReference type="ChEBI" id="CHEBI:59545"/>
        <dbReference type="EC" id="1.1.1.302"/>
    </reaction>
</comment>
<comment type="pathway">
    <text>Cofactor biosynthesis; riboflavin biosynthesis.</text>
</comment>
<comment type="subunit">
    <text evidence="1">Homodimer.</text>
</comment>
<comment type="similarity">
    <text evidence="2">Belongs to the HTP reductase family.</text>
</comment>
<evidence type="ECO:0000250" key="1"/>
<evidence type="ECO:0000305" key="2"/>
<organism>
    <name type="scientific">Eremothecium gossypii (strain ATCC 10895 / CBS 109.51 / FGSC 9923 / NRRL Y-1056)</name>
    <name type="common">Yeast</name>
    <name type="synonym">Ashbya gossypii</name>
    <dbReference type="NCBI Taxonomy" id="284811"/>
    <lineage>
        <taxon>Eukaryota</taxon>
        <taxon>Fungi</taxon>
        <taxon>Dikarya</taxon>
        <taxon>Ascomycota</taxon>
        <taxon>Saccharomycotina</taxon>
        <taxon>Saccharomycetes</taxon>
        <taxon>Saccharomycetales</taxon>
        <taxon>Saccharomycetaceae</taxon>
        <taxon>Eremothecium</taxon>
    </lineage>
</organism>
<keyword id="KW-0521">NADP</keyword>
<keyword id="KW-0560">Oxidoreductase</keyword>
<keyword id="KW-1185">Reference proteome</keyword>
<keyword id="KW-0686">Riboflavin biosynthesis</keyword>